<accession>Q6HE08</accession>
<feature type="chain" id="PRO_0000271988" description="Bacilliredoxin BT9727_3899">
    <location>
        <begin position="1"/>
        <end position="144"/>
    </location>
</feature>
<comment type="similarity">
    <text evidence="1">Belongs to the bacilliredoxin family.</text>
</comment>
<evidence type="ECO:0000305" key="1"/>
<dbReference type="EMBL" id="AE017355">
    <property type="protein sequence ID" value="AAT61043.1"/>
    <property type="molecule type" value="Genomic_DNA"/>
</dbReference>
<dbReference type="RefSeq" id="YP_038218.1">
    <property type="nucleotide sequence ID" value="NC_005957.1"/>
</dbReference>
<dbReference type="SMR" id="Q6HE08"/>
<dbReference type="KEGG" id="btk:BT9727_3899"/>
<dbReference type="PATRIC" id="fig|281309.8.peg.4160"/>
<dbReference type="HOGENOM" id="CLU_132521_0_0_9"/>
<dbReference type="PRO" id="PR:Q6HE08"/>
<dbReference type="Proteomes" id="UP000001301">
    <property type="component" value="Chromosome"/>
</dbReference>
<dbReference type="GO" id="GO:0045454">
    <property type="term" value="P:cell redox homeostasis"/>
    <property type="evidence" value="ECO:0000250"/>
    <property type="project" value="UniProtKB"/>
</dbReference>
<dbReference type="Gene3D" id="3.40.30.10">
    <property type="entry name" value="Glutaredoxin"/>
    <property type="match status" value="1"/>
</dbReference>
<dbReference type="InterPro" id="IPR009474">
    <property type="entry name" value="BrxB/BrxA"/>
</dbReference>
<dbReference type="NCBIfam" id="TIGR04191">
    <property type="entry name" value="YphP_YqiW"/>
    <property type="match status" value="1"/>
</dbReference>
<dbReference type="PANTHER" id="PTHR40052:SF1">
    <property type="entry name" value="BACILLIREDOXIN BRXB"/>
    <property type="match status" value="1"/>
</dbReference>
<dbReference type="PANTHER" id="PTHR40052">
    <property type="entry name" value="UPF0403 PROTEIN YQIW-RELATED"/>
    <property type="match status" value="1"/>
</dbReference>
<dbReference type="Pfam" id="PF06491">
    <property type="entry name" value="Disulph_isomer"/>
    <property type="match status" value="1"/>
</dbReference>
<name>Y3899_BACHK</name>
<reference key="1">
    <citation type="journal article" date="2006" name="J. Bacteriol.">
        <title>Pathogenomic sequence analysis of Bacillus cereus and Bacillus thuringiensis isolates closely related to Bacillus anthracis.</title>
        <authorList>
            <person name="Han C.S."/>
            <person name="Xie G."/>
            <person name="Challacombe J.F."/>
            <person name="Altherr M.R."/>
            <person name="Bhotika S.S."/>
            <person name="Bruce D."/>
            <person name="Campbell C.S."/>
            <person name="Campbell M.L."/>
            <person name="Chen J."/>
            <person name="Chertkov O."/>
            <person name="Cleland C."/>
            <person name="Dimitrijevic M."/>
            <person name="Doggett N.A."/>
            <person name="Fawcett J.J."/>
            <person name="Glavina T."/>
            <person name="Goodwin L.A."/>
            <person name="Hill K.K."/>
            <person name="Hitchcock P."/>
            <person name="Jackson P.J."/>
            <person name="Keim P."/>
            <person name="Kewalramani A.R."/>
            <person name="Longmire J."/>
            <person name="Lucas S."/>
            <person name="Malfatti S."/>
            <person name="McMurry K."/>
            <person name="Meincke L.J."/>
            <person name="Misra M."/>
            <person name="Moseman B.L."/>
            <person name="Mundt M."/>
            <person name="Munk A.C."/>
            <person name="Okinaka R.T."/>
            <person name="Parson-Quintana B."/>
            <person name="Reilly L.P."/>
            <person name="Richardson P."/>
            <person name="Robinson D.L."/>
            <person name="Rubin E."/>
            <person name="Saunders E."/>
            <person name="Tapia R."/>
            <person name="Tesmer J.G."/>
            <person name="Thayer N."/>
            <person name="Thompson L.S."/>
            <person name="Tice H."/>
            <person name="Ticknor L.O."/>
            <person name="Wills P.L."/>
            <person name="Brettin T.S."/>
            <person name="Gilna P."/>
        </authorList>
    </citation>
    <scope>NUCLEOTIDE SEQUENCE [LARGE SCALE GENOMIC DNA]</scope>
    <source>
        <strain>97-27</strain>
    </source>
</reference>
<protein>
    <recommendedName>
        <fullName evidence="1">Bacilliredoxin BT9727_3899</fullName>
    </recommendedName>
</protein>
<sequence length="144" mass="16085">MINFNFFMNDVVRQAREEIVSAGYTELTTPEAVEEAFKRNGTTLVMVNSVCGCAGGIARPAAAHSVHYDKRPNHLVTVFAGQDKEATARAREYFEGYPPSSPSFALLKDGKIVTMVERHEIEGHEPMQVIAKLQSYFEENCEEL</sequence>
<gene>
    <name type="ordered locus">BT9727_3899</name>
</gene>
<proteinExistence type="inferred from homology"/>
<organism>
    <name type="scientific">Bacillus thuringiensis subsp. konkukian (strain 97-27)</name>
    <dbReference type="NCBI Taxonomy" id="281309"/>
    <lineage>
        <taxon>Bacteria</taxon>
        <taxon>Bacillati</taxon>
        <taxon>Bacillota</taxon>
        <taxon>Bacilli</taxon>
        <taxon>Bacillales</taxon>
        <taxon>Bacillaceae</taxon>
        <taxon>Bacillus</taxon>
        <taxon>Bacillus cereus group</taxon>
    </lineage>
</organism>